<reference key="1">
    <citation type="submission" date="2008-06" db="EMBL/GenBank/DDBJ databases">
        <title>Complete sequence of Chlorobaculum parvum NCIB 8327.</title>
        <authorList>
            <consortium name="US DOE Joint Genome Institute"/>
            <person name="Lucas S."/>
            <person name="Copeland A."/>
            <person name="Lapidus A."/>
            <person name="Glavina del Rio T."/>
            <person name="Dalin E."/>
            <person name="Tice H."/>
            <person name="Bruce D."/>
            <person name="Goodwin L."/>
            <person name="Pitluck S."/>
            <person name="Schmutz J."/>
            <person name="Larimer F."/>
            <person name="Land M."/>
            <person name="Hauser L."/>
            <person name="Kyrpides N."/>
            <person name="Mikhailova N."/>
            <person name="Zhao F."/>
            <person name="Li T."/>
            <person name="Liu Z."/>
            <person name="Overmann J."/>
            <person name="Bryant D.A."/>
            <person name="Richardson P."/>
        </authorList>
    </citation>
    <scope>NUCLEOTIDE SEQUENCE [LARGE SCALE GENOMIC DNA]</scope>
    <source>
        <strain>DSM 263 / NCIMB 8327</strain>
    </source>
</reference>
<organism>
    <name type="scientific">Chlorobaculum parvum (strain DSM 263 / NCIMB 8327)</name>
    <name type="common">Chlorobium vibrioforme subsp. thiosulfatophilum</name>
    <dbReference type="NCBI Taxonomy" id="517417"/>
    <lineage>
        <taxon>Bacteria</taxon>
        <taxon>Pseudomonadati</taxon>
        <taxon>Chlorobiota</taxon>
        <taxon>Chlorobiia</taxon>
        <taxon>Chlorobiales</taxon>
        <taxon>Chlorobiaceae</taxon>
        <taxon>Chlorobaculum</taxon>
    </lineage>
</organism>
<protein>
    <recommendedName>
        <fullName evidence="1">Putative cysteine ligase BshC</fullName>
        <ecNumber evidence="1">6.-.-.-</ecNumber>
    </recommendedName>
</protein>
<comment type="similarity">
    <text evidence="1">Belongs to the BshC family.</text>
</comment>
<dbReference type="EC" id="6.-.-.-" evidence="1"/>
<dbReference type="EMBL" id="CP001099">
    <property type="protein sequence ID" value="ACF10823.1"/>
    <property type="molecule type" value="Genomic_DNA"/>
</dbReference>
<dbReference type="RefSeq" id="WP_012501656.1">
    <property type="nucleotide sequence ID" value="NC_011027.1"/>
</dbReference>
<dbReference type="SMR" id="B3QL35"/>
<dbReference type="STRING" id="517417.Cpar_0400"/>
<dbReference type="KEGG" id="cpc:Cpar_0400"/>
<dbReference type="eggNOG" id="COG4365">
    <property type="taxonomic scope" value="Bacteria"/>
</dbReference>
<dbReference type="HOGENOM" id="CLU_022249_2_0_10"/>
<dbReference type="OrthoDB" id="9765151at2"/>
<dbReference type="Proteomes" id="UP000008811">
    <property type="component" value="Chromosome"/>
</dbReference>
<dbReference type="GO" id="GO:0016874">
    <property type="term" value="F:ligase activity"/>
    <property type="evidence" value="ECO:0007669"/>
    <property type="project" value="UniProtKB-UniRule"/>
</dbReference>
<dbReference type="HAMAP" id="MF_01867">
    <property type="entry name" value="BshC"/>
    <property type="match status" value="1"/>
</dbReference>
<dbReference type="InterPro" id="IPR011199">
    <property type="entry name" value="Bacillithiol_biosynth_BshC"/>
</dbReference>
<dbReference type="InterPro" id="IPR055399">
    <property type="entry name" value="CC_BshC"/>
</dbReference>
<dbReference type="InterPro" id="IPR055398">
    <property type="entry name" value="Rossmann-like_BshC"/>
</dbReference>
<dbReference type="NCBIfam" id="TIGR03998">
    <property type="entry name" value="thiol_BshC"/>
    <property type="match status" value="1"/>
</dbReference>
<dbReference type="Pfam" id="PF24850">
    <property type="entry name" value="CC_BshC"/>
    <property type="match status" value="1"/>
</dbReference>
<dbReference type="Pfam" id="PF10079">
    <property type="entry name" value="Rossmann-like_BshC"/>
    <property type="match status" value="1"/>
</dbReference>
<dbReference type="PIRSF" id="PIRSF012535">
    <property type="entry name" value="UCP012535"/>
    <property type="match status" value="1"/>
</dbReference>
<evidence type="ECO:0000255" key="1">
    <source>
        <dbReference type="HAMAP-Rule" id="MF_01867"/>
    </source>
</evidence>
<feature type="chain" id="PRO_0000378225" description="Putative cysteine ligase BshC">
    <location>
        <begin position="1"/>
        <end position="563"/>
    </location>
</feature>
<feature type="coiled-coil region" evidence="1">
    <location>
        <begin position="494"/>
        <end position="518"/>
    </location>
</feature>
<accession>B3QL35</accession>
<sequence length="563" mass="64013">MNTFLIDYQRIQTPKKGFSRLFCDYTSDTEARAKLVSNCFHLDYRKDADYYRHLGLLASRDFKRNALVELLLKQNSRFGGSERQRQEIEKLRSSRCMAIVTGQQTGLFTGPMYTIYKALSAVVIARKQKELFPEYDFVPVFWIESEDHDFDEASATALFAGAGLETIQAEGGHRQQDQMAGPTPLGSGITETVREFLDLLPDSDFKPEIAELLHSAYTPESTFEIAFATTMNRLFSNHPLILLSTQDAEFKRLAAPMLCKEIESAPASSYDVVAQSSTLESMGYPAQTKPRAVNLFYLNQLGQRLKIEQPSPENFMILPDRQRYTRHQLLEFCQDHPERFSPNVILRPIVQDAVLPTFAYIGGPGEVSYLSQFRKVYERFGLVMPFVIPRGSFTLVEPKITRTMDKVLKVTGKPSFSRRQVYEALFGNLQELRKSMVSGAENQNLDALFEQVESEVTRSLSTLEPALVKMDPTLQQALAGSSGQIAKIIGNIREKTYRAGRRKHDELLQQLDKAELNLFPEGVPQERLINIFYYLNKYGPSLIDDLERVLQGYSTESHLIVEL</sequence>
<name>BSHC_CHLP8</name>
<gene>
    <name evidence="1" type="primary">bshC</name>
    <name type="ordered locus">Cpar_0400</name>
</gene>
<proteinExistence type="inferred from homology"/>
<keyword id="KW-0175">Coiled coil</keyword>
<keyword id="KW-0436">Ligase</keyword>